<dbReference type="EMBL" id="CP000687">
    <property type="protein sequence ID" value="ABY69748.1"/>
    <property type="molecule type" value="Genomic_DNA"/>
</dbReference>
<dbReference type="RefSeq" id="WP_005598107.1">
    <property type="nucleotide sequence ID" value="NC_010278.1"/>
</dbReference>
<dbReference type="SMR" id="B0BQB3"/>
<dbReference type="GeneID" id="92744281"/>
<dbReference type="KEGG" id="apj:APJL_1192"/>
<dbReference type="HOGENOM" id="CLU_113441_6_1_6"/>
<dbReference type="Proteomes" id="UP000008547">
    <property type="component" value="Chromosome"/>
</dbReference>
<dbReference type="GO" id="GO:0022627">
    <property type="term" value="C:cytosolic small ribosomal subunit"/>
    <property type="evidence" value="ECO:0007669"/>
    <property type="project" value="TreeGrafter"/>
</dbReference>
<dbReference type="GO" id="GO:0070181">
    <property type="term" value="F:small ribosomal subunit rRNA binding"/>
    <property type="evidence" value="ECO:0007669"/>
    <property type="project" value="TreeGrafter"/>
</dbReference>
<dbReference type="GO" id="GO:0003735">
    <property type="term" value="F:structural constituent of ribosome"/>
    <property type="evidence" value="ECO:0007669"/>
    <property type="project" value="InterPro"/>
</dbReference>
<dbReference type="GO" id="GO:0006412">
    <property type="term" value="P:translation"/>
    <property type="evidence" value="ECO:0007669"/>
    <property type="project" value="UniProtKB-UniRule"/>
</dbReference>
<dbReference type="CDD" id="cd00473">
    <property type="entry name" value="bS6"/>
    <property type="match status" value="1"/>
</dbReference>
<dbReference type="FunFam" id="3.30.70.60:FF:000003">
    <property type="entry name" value="30S ribosomal protein S6"/>
    <property type="match status" value="1"/>
</dbReference>
<dbReference type="Gene3D" id="3.30.70.60">
    <property type="match status" value="1"/>
</dbReference>
<dbReference type="HAMAP" id="MF_00360">
    <property type="entry name" value="Ribosomal_bS6"/>
    <property type="match status" value="1"/>
</dbReference>
<dbReference type="InterPro" id="IPR000529">
    <property type="entry name" value="Ribosomal_bS6"/>
</dbReference>
<dbReference type="InterPro" id="IPR020815">
    <property type="entry name" value="Ribosomal_bS6_CS"/>
</dbReference>
<dbReference type="InterPro" id="IPR035980">
    <property type="entry name" value="Ribosomal_bS6_sf"/>
</dbReference>
<dbReference type="InterPro" id="IPR020814">
    <property type="entry name" value="Ribosomal_S6_plastid/chlpt"/>
</dbReference>
<dbReference type="InterPro" id="IPR014717">
    <property type="entry name" value="Transl_elong_EF1B/ribsomal_bS6"/>
</dbReference>
<dbReference type="NCBIfam" id="TIGR00166">
    <property type="entry name" value="S6"/>
    <property type="match status" value="1"/>
</dbReference>
<dbReference type="PANTHER" id="PTHR21011">
    <property type="entry name" value="MITOCHONDRIAL 28S RIBOSOMAL PROTEIN S6"/>
    <property type="match status" value="1"/>
</dbReference>
<dbReference type="PANTHER" id="PTHR21011:SF1">
    <property type="entry name" value="SMALL RIBOSOMAL SUBUNIT PROTEIN BS6M"/>
    <property type="match status" value="1"/>
</dbReference>
<dbReference type="Pfam" id="PF01250">
    <property type="entry name" value="Ribosomal_S6"/>
    <property type="match status" value="1"/>
</dbReference>
<dbReference type="SUPFAM" id="SSF54995">
    <property type="entry name" value="Ribosomal protein S6"/>
    <property type="match status" value="1"/>
</dbReference>
<dbReference type="PROSITE" id="PS01048">
    <property type="entry name" value="RIBOSOMAL_S6"/>
    <property type="match status" value="1"/>
</dbReference>
<organism>
    <name type="scientific">Actinobacillus pleuropneumoniae serotype 3 (strain JL03)</name>
    <dbReference type="NCBI Taxonomy" id="434271"/>
    <lineage>
        <taxon>Bacteria</taxon>
        <taxon>Pseudomonadati</taxon>
        <taxon>Pseudomonadota</taxon>
        <taxon>Gammaproteobacteria</taxon>
        <taxon>Pasteurellales</taxon>
        <taxon>Pasteurellaceae</taxon>
        <taxon>Actinobacillus</taxon>
    </lineage>
</organism>
<protein>
    <recommendedName>
        <fullName evidence="1">Small ribosomal subunit protein bS6</fullName>
    </recommendedName>
    <alternativeName>
        <fullName evidence="2">30S ribosomal protein S6</fullName>
    </alternativeName>
</protein>
<gene>
    <name evidence="1" type="primary">rpsF</name>
    <name type="ordered locus">APJL_1192</name>
</gene>
<evidence type="ECO:0000255" key="1">
    <source>
        <dbReference type="HAMAP-Rule" id="MF_00360"/>
    </source>
</evidence>
<evidence type="ECO:0000305" key="2"/>
<keyword id="KW-0687">Ribonucleoprotein</keyword>
<keyword id="KW-0689">Ribosomal protein</keyword>
<keyword id="KW-0694">RNA-binding</keyword>
<keyword id="KW-0699">rRNA-binding</keyword>
<feature type="chain" id="PRO_1000120699" description="Small ribosomal subunit protein bS6">
    <location>
        <begin position="1"/>
        <end position="124"/>
    </location>
</feature>
<proteinExistence type="inferred from homology"/>
<accession>B0BQB3</accession>
<name>RS6_ACTPJ</name>
<sequence>MRHYEIVFMVHPDQSEQVPAMIERYTASVKEAGGQVHRLEDWGRRQLAYPINKLHKAHYVLMNVEAPQSVIDELETNFRYNDAVLRNLIVHTKAAVTEASPMVKAKESKVAEAVAEVESEEAGE</sequence>
<reference key="1">
    <citation type="journal article" date="2008" name="PLoS ONE">
        <title>Genome biology of Actinobacillus pleuropneumoniae JL03, an isolate of serotype 3 prevalent in China.</title>
        <authorList>
            <person name="Xu Z."/>
            <person name="Zhou Y."/>
            <person name="Li L."/>
            <person name="Zhou R."/>
            <person name="Xiao S."/>
            <person name="Wan Y."/>
            <person name="Zhang S."/>
            <person name="Wang K."/>
            <person name="Li W."/>
            <person name="Li L."/>
            <person name="Jin H."/>
            <person name="Kang M."/>
            <person name="Dalai B."/>
            <person name="Li T."/>
            <person name="Liu L."/>
            <person name="Cheng Y."/>
            <person name="Zhang L."/>
            <person name="Xu T."/>
            <person name="Zheng H."/>
            <person name="Pu S."/>
            <person name="Wang B."/>
            <person name="Gu W."/>
            <person name="Zhang X.L."/>
            <person name="Zhu G.-F."/>
            <person name="Wang S."/>
            <person name="Zhao G.-P."/>
            <person name="Chen H."/>
        </authorList>
    </citation>
    <scope>NUCLEOTIDE SEQUENCE [LARGE SCALE GENOMIC DNA]</scope>
    <source>
        <strain>JL03</strain>
    </source>
</reference>
<comment type="function">
    <text evidence="1">Binds together with bS18 to 16S ribosomal RNA.</text>
</comment>
<comment type="similarity">
    <text evidence="1">Belongs to the bacterial ribosomal protein bS6 family.</text>
</comment>